<evidence type="ECO:0000250" key="1">
    <source>
        <dbReference type="UniProtKB" id="P22337"/>
    </source>
</evidence>
<evidence type="ECO:0000255" key="2"/>
<evidence type="ECO:0000269" key="3">
    <source>
    </source>
</evidence>
<evidence type="ECO:0000269" key="4">
    <source>
    </source>
</evidence>
<evidence type="ECO:0000305" key="5"/>
<evidence type="ECO:0000305" key="6">
    <source>
    </source>
</evidence>
<organism>
    <name type="scientific">Arabidopsis thaliana</name>
    <name type="common">Mouse-ear cress</name>
    <dbReference type="NCBI Taxonomy" id="3702"/>
    <lineage>
        <taxon>Eukaryota</taxon>
        <taxon>Viridiplantae</taxon>
        <taxon>Streptophyta</taxon>
        <taxon>Embryophyta</taxon>
        <taxon>Tracheophyta</taxon>
        <taxon>Spermatophyta</taxon>
        <taxon>Magnoliopsida</taxon>
        <taxon>eudicotyledons</taxon>
        <taxon>Gunneridae</taxon>
        <taxon>Pentapetalae</taxon>
        <taxon>rosids</taxon>
        <taxon>malvids</taxon>
        <taxon>Brassicales</taxon>
        <taxon>Brassicaceae</taxon>
        <taxon>Camelineae</taxon>
        <taxon>Arabidopsis</taxon>
    </lineage>
</organism>
<feature type="transit peptide" description="Chloroplast" evidence="2">
    <location>
        <begin position="1"/>
        <end position="44"/>
    </location>
</feature>
<feature type="chain" id="PRO_0000401420" description="Stearoyl-[acyl-carrier-protein] 9-desaturase 2, chloroplastic">
    <location>
        <begin position="45"/>
        <end position="411"/>
    </location>
</feature>
<feature type="binding site" evidence="1">
    <location>
        <position position="148"/>
    </location>
    <ligand>
        <name>Fe cation</name>
        <dbReference type="ChEBI" id="CHEBI:24875"/>
        <label>1</label>
    </ligand>
</feature>
<feature type="binding site" evidence="1">
    <location>
        <position position="186"/>
    </location>
    <ligand>
        <name>Fe cation</name>
        <dbReference type="ChEBI" id="CHEBI:24875"/>
        <label>1</label>
    </ligand>
</feature>
<feature type="binding site" evidence="1">
    <location>
        <position position="186"/>
    </location>
    <ligand>
        <name>Fe cation</name>
        <dbReference type="ChEBI" id="CHEBI:24875"/>
        <label>2</label>
    </ligand>
</feature>
<feature type="binding site" evidence="1">
    <location>
        <position position="189"/>
    </location>
    <ligand>
        <name>Fe cation</name>
        <dbReference type="ChEBI" id="CHEBI:24875"/>
        <label>1</label>
    </ligand>
</feature>
<feature type="binding site" evidence="1">
    <location>
        <position position="239"/>
    </location>
    <ligand>
        <name>Fe cation</name>
        <dbReference type="ChEBI" id="CHEBI:24875"/>
        <label>2</label>
    </ligand>
</feature>
<feature type="binding site" evidence="1">
    <location>
        <position position="272"/>
    </location>
    <ligand>
        <name>Fe cation</name>
        <dbReference type="ChEBI" id="CHEBI:24875"/>
        <label>1</label>
    </ligand>
</feature>
<feature type="binding site" evidence="1">
    <location>
        <position position="272"/>
    </location>
    <ligand>
        <name>Fe cation</name>
        <dbReference type="ChEBI" id="CHEBI:24875"/>
        <label>2</label>
    </ligand>
</feature>
<feature type="binding site" evidence="1">
    <location>
        <position position="275"/>
    </location>
    <ligand>
        <name>Fe cation</name>
        <dbReference type="ChEBI" id="CHEBI:24875"/>
        <label>2</label>
    </ligand>
</feature>
<feature type="site" description="Confers substrate specificity" evidence="6">
    <location>
        <position position="224"/>
    </location>
</feature>
<feature type="sequence conflict" description="In Ref. 4; BAD43925." evidence="5" ref="4">
    <original>N</original>
    <variation>S</variation>
    <location>
        <position position="6"/>
    </location>
</feature>
<feature type="sequence conflict" description="In Ref. 4; BAD43925 and 3; AAQ62867." evidence="5" ref="4 3">
    <original>P</original>
    <variation>S</variation>
    <location>
        <position position="174"/>
    </location>
</feature>
<feature type="sequence conflict" description="In Ref. 3; AAQ62867." evidence="5" ref="3">
    <original>S</original>
    <variation>F</variation>
    <location>
        <position position="218"/>
    </location>
</feature>
<accession>Q9M881</accession>
<accession>F4IX66</accession>
<accession>Q67ZF5</accession>
<accession>Q6NQK5</accession>
<sequence>MALLLNSTITVAMKQNPLVAVSFPRTTCLGSSFSPPRLLRVSCVATNPSKTSEETDKKKFRPIKEVPNQVTHTITQEKLEIFKSMENWAQENLLSYLKPVEASWQPQDFLPETNDEDRFYEQVKELRDRTKEIPDDYFVVLVGDMITEEALPTYQTTLNTLDGVKDETGGSLTPWAVWVRAWTAEENRHGDLLNKYLYLSGRVDMRHVEKTIQYLIGSGMDSKFENNPYNGFIYTSFQERATFISHGNTAKLATTYGDTTLAKICGTIAADEKRHETAYTRIVEKLFEIDPDGTVQALASMMRKRITMPAHLMHDGRDDDLFDHYAAVAQRIGVYTATDYAGILEFLLRRWEVEKLGMGLSGEGRRAQDYLCTLPQRIRRLEERANDRVKLASKSKPSVSFSWIYGREVEL</sequence>
<gene>
    <name type="primary">S-ACP-DES2</name>
    <name type="synonym">AAD2</name>
    <name type="synonym">SAD2</name>
    <name type="ordered locus">At3g02610</name>
    <name type="ORF">F16B3.24</name>
</gene>
<reference key="1">
    <citation type="journal article" date="2000" name="Nature">
        <title>Sequence and analysis of chromosome 3 of the plant Arabidopsis thaliana.</title>
        <authorList>
            <person name="Salanoubat M."/>
            <person name="Lemcke K."/>
            <person name="Rieger M."/>
            <person name="Ansorge W."/>
            <person name="Unseld M."/>
            <person name="Fartmann B."/>
            <person name="Valle G."/>
            <person name="Bloecker H."/>
            <person name="Perez-Alonso M."/>
            <person name="Obermaier B."/>
            <person name="Delseny M."/>
            <person name="Boutry M."/>
            <person name="Grivell L.A."/>
            <person name="Mache R."/>
            <person name="Puigdomenech P."/>
            <person name="De Simone V."/>
            <person name="Choisne N."/>
            <person name="Artiguenave F."/>
            <person name="Robert C."/>
            <person name="Brottier P."/>
            <person name="Wincker P."/>
            <person name="Cattolico L."/>
            <person name="Weissenbach J."/>
            <person name="Saurin W."/>
            <person name="Quetier F."/>
            <person name="Schaefer M."/>
            <person name="Mueller-Auer S."/>
            <person name="Gabel C."/>
            <person name="Fuchs M."/>
            <person name="Benes V."/>
            <person name="Wurmbach E."/>
            <person name="Drzonek H."/>
            <person name="Erfle H."/>
            <person name="Jordan N."/>
            <person name="Bangert S."/>
            <person name="Wiedelmann R."/>
            <person name="Kranz H."/>
            <person name="Voss H."/>
            <person name="Holland R."/>
            <person name="Brandt P."/>
            <person name="Nyakatura G."/>
            <person name="Vezzi A."/>
            <person name="D'Angelo M."/>
            <person name="Pallavicini A."/>
            <person name="Toppo S."/>
            <person name="Simionati B."/>
            <person name="Conrad A."/>
            <person name="Hornischer K."/>
            <person name="Kauer G."/>
            <person name="Loehnert T.-H."/>
            <person name="Nordsiek G."/>
            <person name="Reichelt J."/>
            <person name="Scharfe M."/>
            <person name="Schoen O."/>
            <person name="Bargues M."/>
            <person name="Terol J."/>
            <person name="Climent J."/>
            <person name="Navarro P."/>
            <person name="Collado C."/>
            <person name="Perez-Perez A."/>
            <person name="Ottenwaelder B."/>
            <person name="Duchemin D."/>
            <person name="Cooke R."/>
            <person name="Laudie M."/>
            <person name="Berger-Llauro C."/>
            <person name="Purnelle B."/>
            <person name="Masuy D."/>
            <person name="de Haan M."/>
            <person name="Maarse A.C."/>
            <person name="Alcaraz J.-P."/>
            <person name="Cottet A."/>
            <person name="Casacuberta E."/>
            <person name="Monfort A."/>
            <person name="Argiriou A."/>
            <person name="Flores M."/>
            <person name="Liguori R."/>
            <person name="Vitale D."/>
            <person name="Mannhaupt G."/>
            <person name="Haase D."/>
            <person name="Schoof H."/>
            <person name="Rudd S."/>
            <person name="Zaccaria P."/>
            <person name="Mewes H.-W."/>
            <person name="Mayer K.F.X."/>
            <person name="Kaul S."/>
            <person name="Town C.D."/>
            <person name="Koo H.L."/>
            <person name="Tallon L.J."/>
            <person name="Jenkins J."/>
            <person name="Rooney T."/>
            <person name="Rizzo M."/>
            <person name="Walts A."/>
            <person name="Utterback T."/>
            <person name="Fujii C.Y."/>
            <person name="Shea T.P."/>
            <person name="Creasy T.H."/>
            <person name="Haas B."/>
            <person name="Maiti R."/>
            <person name="Wu D."/>
            <person name="Peterson J."/>
            <person name="Van Aken S."/>
            <person name="Pai G."/>
            <person name="Militscher J."/>
            <person name="Sellers P."/>
            <person name="Gill J.E."/>
            <person name="Feldblyum T.V."/>
            <person name="Preuss D."/>
            <person name="Lin X."/>
            <person name="Nierman W.C."/>
            <person name="Salzberg S.L."/>
            <person name="White O."/>
            <person name="Venter J.C."/>
            <person name="Fraser C.M."/>
            <person name="Kaneko T."/>
            <person name="Nakamura Y."/>
            <person name="Sato S."/>
            <person name="Kato T."/>
            <person name="Asamizu E."/>
            <person name="Sasamoto S."/>
            <person name="Kimura T."/>
            <person name="Idesawa K."/>
            <person name="Kawashima K."/>
            <person name="Kishida Y."/>
            <person name="Kiyokawa C."/>
            <person name="Kohara M."/>
            <person name="Matsumoto M."/>
            <person name="Matsuno A."/>
            <person name="Muraki A."/>
            <person name="Nakayama S."/>
            <person name="Nakazaki N."/>
            <person name="Shinpo S."/>
            <person name="Takeuchi C."/>
            <person name="Wada T."/>
            <person name="Watanabe A."/>
            <person name="Yamada M."/>
            <person name="Yasuda M."/>
            <person name="Tabata S."/>
        </authorList>
    </citation>
    <scope>NUCLEOTIDE SEQUENCE [LARGE SCALE GENOMIC DNA]</scope>
    <source>
        <strain>cv. Columbia</strain>
    </source>
</reference>
<reference key="2">
    <citation type="journal article" date="2017" name="Plant J.">
        <title>Araport11: a complete reannotation of the Arabidopsis thaliana reference genome.</title>
        <authorList>
            <person name="Cheng C.Y."/>
            <person name="Krishnakumar V."/>
            <person name="Chan A.P."/>
            <person name="Thibaud-Nissen F."/>
            <person name="Schobel S."/>
            <person name="Town C.D."/>
        </authorList>
    </citation>
    <scope>GENOME REANNOTATION</scope>
    <source>
        <strain>cv. Columbia</strain>
    </source>
</reference>
<reference key="3">
    <citation type="journal article" date="2003" name="Science">
        <title>Empirical analysis of transcriptional activity in the Arabidopsis genome.</title>
        <authorList>
            <person name="Yamada K."/>
            <person name="Lim J."/>
            <person name="Dale J.M."/>
            <person name="Chen H."/>
            <person name="Shinn P."/>
            <person name="Palm C.J."/>
            <person name="Southwick A.M."/>
            <person name="Wu H.C."/>
            <person name="Kim C.J."/>
            <person name="Nguyen M."/>
            <person name="Pham P.K."/>
            <person name="Cheuk R.F."/>
            <person name="Karlin-Newmann G."/>
            <person name="Liu S.X."/>
            <person name="Lam B."/>
            <person name="Sakano H."/>
            <person name="Wu T."/>
            <person name="Yu G."/>
            <person name="Miranda M."/>
            <person name="Quach H.L."/>
            <person name="Tripp M."/>
            <person name="Chang C.H."/>
            <person name="Lee J.M."/>
            <person name="Toriumi M.J."/>
            <person name="Chan M.M."/>
            <person name="Tang C.C."/>
            <person name="Onodera C.S."/>
            <person name="Deng J.M."/>
            <person name="Akiyama K."/>
            <person name="Ansari Y."/>
            <person name="Arakawa T."/>
            <person name="Banh J."/>
            <person name="Banno F."/>
            <person name="Bowser L."/>
            <person name="Brooks S.Y."/>
            <person name="Carninci P."/>
            <person name="Chao Q."/>
            <person name="Choy N."/>
            <person name="Enju A."/>
            <person name="Goldsmith A.D."/>
            <person name="Gurjal M."/>
            <person name="Hansen N.F."/>
            <person name="Hayashizaki Y."/>
            <person name="Johnson-Hopson C."/>
            <person name="Hsuan V.W."/>
            <person name="Iida K."/>
            <person name="Karnes M."/>
            <person name="Khan S."/>
            <person name="Koesema E."/>
            <person name="Ishida J."/>
            <person name="Jiang P.X."/>
            <person name="Jones T."/>
            <person name="Kawai J."/>
            <person name="Kamiya A."/>
            <person name="Meyers C."/>
            <person name="Nakajima M."/>
            <person name="Narusaka M."/>
            <person name="Seki M."/>
            <person name="Sakurai T."/>
            <person name="Satou M."/>
            <person name="Tamse R."/>
            <person name="Vaysberg M."/>
            <person name="Wallender E.K."/>
            <person name="Wong C."/>
            <person name="Yamamura Y."/>
            <person name="Yuan S."/>
            <person name="Shinozaki K."/>
            <person name="Davis R.W."/>
            <person name="Theologis A."/>
            <person name="Ecker J.R."/>
        </authorList>
    </citation>
    <scope>NUCLEOTIDE SEQUENCE [LARGE SCALE MRNA]</scope>
    <source>
        <strain>cv. Columbia</strain>
    </source>
</reference>
<reference key="4">
    <citation type="submission" date="2004-09" db="EMBL/GenBank/DDBJ databases">
        <title>Large-scale analysis of RIKEN Arabidopsis full-length (RAFL) cDNAs.</title>
        <authorList>
            <person name="Totoki Y."/>
            <person name="Seki M."/>
            <person name="Ishida J."/>
            <person name="Nakajima M."/>
            <person name="Enju A."/>
            <person name="Kamiya A."/>
            <person name="Narusaka M."/>
            <person name="Shin-i T."/>
            <person name="Nakagawa M."/>
            <person name="Sakamoto N."/>
            <person name="Oishi K."/>
            <person name="Kohara Y."/>
            <person name="Kobayashi M."/>
            <person name="Toyoda A."/>
            <person name="Sakaki Y."/>
            <person name="Sakurai T."/>
            <person name="Iida K."/>
            <person name="Akiyama K."/>
            <person name="Satou M."/>
            <person name="Toyoda T."/>
            <person name="Konagaya A."/>
            <person name="Carninci P."/>
            <person name="Kawai J."/>
            <person name="Hayashizaki Y."/>
            <person name="Shinozaki K."/>
        </authorList>
    </citation>
    <scope>NUCLEOTIDE SEQUENCE [LARGE SCALE MRNA]</scope>
    <source>
        <strain>cv. Columbia</strain>
    </source>
</reference>
<reference key="5">
    <citation type="journal article" date="2007" name="Plant Mol. Biol.">
        <title>The Arabidopsis stearoyl-acyl carrier protein-desaturase family and the contribution of leaf isoforms to oleic acid synthesis.</title>
        <authorList>
            <person name="Kachroo A."/>
            <person name="Shanklin J."/>
            <person name="Whittle E."/>
            <person name="Lapchyk L."/>
            <person name="Hildebrand D."/>
            <person name="Kachroo P."/>
        </authorList>
    </citation>
    <scope>GENE FAMILY</scope>
    <scope>TISSUE SPECIFICITY</scope>
</reference>
<reference key="6">
    <citation type="journal article" date="2016" name="Plant Cell">
        <title>Transcriptional activation of two palmitoyl-ACP delta9 desaturase genes by MYB115 and MYB118 is critical for biosynthesis of omega-7 monounsaturated fatty acid in the endosperm of Arabidopsis seeds.</title>
        <authorList>
            <person name="Troncoso-Ponce M.A."/>
            <person name="Barthole G."/>
            <person name="Tremblais G."/>
            <person name="To A."/>
            <person name="Miquel M."/>
            <person name="Lepiniec L."/>
            <person name="Baud S."/>
        </authorList>
    </citation>
    <scope>FUNCTION</scope>
    <scope>DISRUPTION PHENOTYPE</scope>
    <scope>INDUCTION BY MYB115 AND MYB118</scope>
    <scope>DEVELOPMENTAL STAGE</scope>
    <scope>SITE FOR SUBSTRATE SPECIFICITY</scope>
    <scope>CATALYTIC ACTIVITY</scope>
    <source>
        <strain>cv. Columbia</strain>
    </source>
</reference>
<keyword id="KW-0150">Chloroplast</keyword>
<keyword id="KW-0275">Fatty acid biosynthesis</keyword>
<keyword id="KW-0276">Fatty acid metabolism</keyword>
<keyword id="KW-0408">Iron</keyword>
<keyword id="KW-0444">Lipid biosynthesis</keyword>
<keyword id="KW-0443">Lipid metabolism</keyword>
<keyword id="KW-0479">Metal-binding</keyword>
<keyword id="KW-0560">Oxidoreductase</keyword>
<keyword id="KW-0934">Plastid</keyword>
<keyword id="KW-1185">Reference proteome</keyword>
<keyword id="KW-0809">Transit peptide</keyword>
<name>STAD2_ARATH</name>
<comment type="function">
    <text evidence="1 4">Converts stearoyl-ACP to oleoyl-ACP by introduction of a cis double bond between carbons 9 and 10 of the acyl chain (By similarity). Exhibits delta-9 palmitoyl-[acyl-carrier-protein] desaturase (PAD) activity. Involved in omega-7 monounsaturated fatty acid biosynthesis, especially in the endosperm oil (PubMed:27681170).</text>
</comment>
<comment type="catalytic activity">
    <reaction evidence="4">
        <text>octadecanoyl-[ACP] + 2 reduced [2Fe-2S]-[ferredoxin] + O2 + 2 H(+) = (9Z)-octadecenoyl-[ACP] + 2 oxidized [2Fe-2S]-[ferredoxin] + 2 H2O</text>
        <dbReference type="Rhea" id="RHEA:11776"/>
        <dbReference type="Rhea" id="RHEA-COMP:9656"/>
        <dbReference type="Rhea" id="RHEA-COMP:9924"/>
        <dbReference type="Rhea" id="RHEA-COMP:10000"/>
        <dbReference type="Rhea" id="RHEA-COMP:10001"/>
        <dbReference type="ChEBI" id="CHEBI:15377"/>
        <dbReference type="ChEBI" id="CHEBI:15378"/>
        <dbReference type="ChEBI" id="CHEBI:15379"/>
        <dbReference type="ChEBI" id="CHEBI:33737"/>
        <dbReference type="ChEBI" id="CHEBI:33738"/>
        <dbReference type="ChEBI" id="CHEBI:78495"/>
        <dbReference type="ChEBI" id="CHEBI:78783"/>
        <dbReference type="EC" id="1.14.19.2"/>
    </reaction>
</comment>
<comment type="cofactor">
    <cofactor evidence="1">
        <name>Fe(2+)</name>
        <dbReference type="ChEBI" id="CHEBI:29033"/>
    </cofactor>
    <text evidence="1">Binds 2 Fe(2+) ions per subunit.</text>
</comment>
<comment type="pathway">
    <text>Lipid metabolism; fatty acid metabolism.</text>
</comment>
<comment type="subunit">
    <text evidence="1">Homodimer.</text>
</comment>
<comment type="subcellular location">
    <subcellularLocation>
        <location evidence="5">Plastid</location>
        <location evidence="5">Chloroplast</location>
    </subcellularLocation>
</comment>
<comment type="tissue specificity">
    <text evidence="3">Preferentially expressed in roots and flowers.</text>
</comment>
<comment type="developmental stage">
    <text evidence="4">Accumulates in maturing endosperm.</text>
</comment>
<comment type="induction">
    <text evidence="4">Activated by MYB115 and MYB118 in the endosperm.</text>
</comment>
<comment type="disruption phenotype">
    <text evidence="4">Reduced omega-7 fatty acids accumulation in the endosperm. The endosperm oil of double mutant aad2-3 aad3-3 lacks omega-7 fatty acids.</text>
</comment>
<comment type="similarity">
    <text evidence="5">Belongs to the fatty acid desaturase type 2 family.</text>
</comment>
<comment type="sequence caution" evidence="5">
    <conflict type="erroneous initiation">
        <sequence resource="EMBL-CDS" id="BAD43925"/>
    </conflict>
    <text>Extended N-terminus.</text>
</comment>
<protein>
    <recommendedName>
        <fullName>Stearoyl-[acyl-carrier-protein] 9-desaturase 2, chloroplastic</fullName>
        <shortName>Stearoyl-ACP desaturase 2</shortName>
        <ecNumber evidence="4">1.14.19.2</ecNumber>
    </recommendedName>
    <alternativeName>
        <fullName>Acyl-[acyl-carrier-protein] desaturase 2</fullName>
    </alternativeName>
</protein>
<proteinExistence type="evidence at protein level"/>
<dbReference type="EC" id="1.14.19.2" evidence="4"/>
<dbReference type="EMBL" id="AC021640">
    <property type="protein sequence ID" value="AAF32468.1"/>
    <property type="molecule type" value="Genomic_DNA"/>
</dbReference>
<dbReference type="EMBL" id="CP002686">
    <property type="protein sequence ID" value="AEE73839.2"/>
    <property type="molecule type" value="Genomic_DNA"/>
</dbReference>
<dbReference type="EMBL" id="BT010447">
    <property type="protein sequence ID" value="AAQ62867.1"/>
    <property type="molecule type" value="mRNA"/>
</dbReference>
<dbReference type="EMBL" id="AK176162">
    <property type="protein sequence ID" value="BAD43925.1"/>
    <property type="status" value="ALT_INIT"/>
    <property type="molecule type" value="mRNA"/>
</dbReference>
<dbReference type="RefSeq" id="NP_001319454.1">
    <property type="nucleotide sequence ID" value="NM_001337426.1"/>
</dbReference>
<dbReference type="SMR" id="Q9M881"/>
<dbReference type="FunCoup" id="Q9M881">
    <property type="interactions" value="71"/>
</dbReference>
<dbReference type="STRING" id="3702.Q9M881"/>
<dbReference type="PaxDb" id="3702-AT3G02610.1"/>
<dbReference type="EnsemblPlants" id="AT3G02610.1">
    <property type="protein sequence ID" value="AT3G02610.1"/>
    <property type="gene ID" value="AT3G02610"/>
</dbReference>
<dbReference type="GeneID" id="820709"/>
<dbReference type="Gramene" id="AT3G02610.1">
    <property type="protein sequence ID" value="AT3G02610.1"/>
    <property type="gene ID" value="AT3G02610"/>
</dbReference>
<dbReference type="KEGG" id="ath:AT3G02610"/>
<dbReference type="Araport" id="AT3G02610"/>
<dbReference type="TAIR" id="AT3G02610">
    <property type="gene designation" value="AAD2"/>
</dbReference>
<dbReference type="eggNOG" id="ENOG502QRJK">
    <property type="taxonomic scope" value="Eukaryota"/>
</dbReference>
<dbReference type="HOGENOM" id="CLU_034505_1_0_1"/>
<dbReference type="InParanoid" id="Q9M881"/>
<dbReference type="PhylomeDB" id="Q9M881"/>
<dbReference type="BRENDA" id="1.14.19.2">
    <property type="organism ID" value="399"/>
</dbReference>
<dbReference type="UniPathway" id="UPA00199"/>
<dbReference type="PRO" id="PR:Q9M881"/>
<dbReference type="Proteomes" id="UP000006548">
    <property type="component" value="Chromosome 3"/>
</dbReference>
<dbReference type="ExpressionAtlas" id="Q9M881">
    <property type="expression patterns" value="baseline and differential"/>
</dbReference>
<dbReference type="GO" id="GO:0009507">
    <property type="term" value="C:chloroplast"/>
    <property type="evidence" value="ECO:0007669"/>
    <property type="project" value="UniProtKB-SubCell"/>
</dbReference>
<dbReference type="GO" id="GO:0046872">
    <property type="term" value="F:metal ion binding"/>
    <property type="evidence" value="ECO:0007669"/>
    <property type="project" value="UniProtKB-KW"/>
</dbReference>
<dbReference type="GO" id="GO:0045300">
    <property type="term" value="F:stearoyl-[ACP] desaturase activity"/>
    <property type="evidence" value="ECO:0000314"/>
    <property type="project" value="UniProtKB"/>
</dbReference>
<dbReference type="GO" id="GO:0055089">
    <property type="term" value="P:fatty acid homeostasis"/>
    <property type="evidence" value="ECO:0000315"/>
    <property type="project" value="UniProtKB"/>
</dbReference>
<dbReference type="GO" id="GO:2000014">
    <property type="term" value="P:regulation of endosperm development"/>
    <property type="evidence" value="ECO:0000315"/>
    <property type="project" value="UniProtKB"/>
</dbReference>
<dbReference type="GO" id="GO:0006636">
    <property type="term" value="P:unsaturated fatty acid biosynthetic process"/>
    <property type="evidence" value="ECO:0000315"/>
    <property type="project" value="UniProtKB"/>
</dbReference>
<dbReference type="CDD" id="cd01050">
    <property type="entry name" value="Acyl_ACP_Desat"/>
    <property type="match status" value="1"/>
</dbReference>
<dbReference type="FunFam" id="1.10.620.20:FF:000002">
    <property type="entry name" value="Stearoyl-[acyl-carrier-protein] 9-desaturase, chloroplastic"/>
    <property type="match status" value="1"/>
</dbReference>
<dbReference type="Gene3D" id="1.10.620.20">
    <property type="entry name" value="Ribonucleotide Reductase, subunit A"/>
    <property type="match status" value="1"/>
</dbReference>
<dbReference type="InterPro" id="IPR005067">
    <property type="entry name" value="Fatty_acid_desaturase-2"/>
</dbReference>
<dbReference type="InterPro" id="IPR009078">
    <property type="entry name" value="Ferritin-like_SF"/>
</dbReference>
<dbReference type="InterPro" id="IPR012348">
    <property type="entry name" value="RNR-like"/>
</dbReference>
<dbReference type="PANTHER" id="PTHR31155">
    <property type="entry name" value="ACYL- ACYL-CARRIER-PROTEIN DESATURASE-RELATED"/>
    <property type="match status" value="1"/>
</dbReference>
<dbReference type="PANTHER" id="PTHR31155:SF30">
    <property type="entry name" value="STEAROYL-[ACYL-CARRIER-PROTEIN] 9-DESATURASE 2, CHLOROPLASTIC-RELATED"/>
    <property type="match status" value="1"/>
</dbReference>
<dbReference type="Pfam" id="PF03405">
    <property type="entry name" value="FA_desaturase_2"/>
    <property type="match status" value="1"/>
</dbReference>
<dbReference type="PIRSF" id="PIRSF000346">
    <property type="entry name" value="Dlt9_acylACP_des"/>
    <property type="match status" value="1"/>
</dbReference>
<dbReference type="SUPFAM" id="SSF47240">
    <property type="entry name" value="Ferritin-like"/>
    <property type="match status" value="1"/>
</dbReference>